<keyword id="KW-0215">Deoxyribonucleotide synthesis</keyword>
<keyword id="KW-0408">Iron</keyword>
<keyword id="KW-0479">Metal-binding</keyword>
<keyword id="KW-0560">Oxidoreductase</keyword>
<keyword id="KW-1185">Reference proteome</keyword>
<feature type="chain" id="PRO_0000190470" description="Ribonucleoside-diphosphate reductase subunit beta">
    <location>
        <begin position="1"/>
        <end position="376"/>
    </location>
</feature>
<feature type="active site" evidence="2">
    <location>
        <position position="123"/>
    </location>
</feature>
<feature type="binding site" evidence="2">
    <location>
        <position position="85"/>
    </location>
    <ligand>
        <name>Fe cation</name>
        <dbReference type="ChEBI" id="CHEBI:24875"/>
        <label>1</label>
    </ligand>
</feature>
<feature type="binding site" evidence="2">
    <location>
        <position position="116"/>
    </location>
    <ligand>
        <name>Fe cation</name>
        <dbReference type="ChEBI" id="CHEBI:24875"/>
        <label>1</label>
    </ligand>
</feature>
<feature type="binding site" evidence="1">
    <location>
        <position position="116"/>
    </location>
    <ligand>
        <name>Fe cation</name>
        <dbReference type="ChEBI" id="CHEBI:24875"/>
        <label>2</label>
    </ligand>
</feature>
<feature type="binding site" evidence="2">
    <location>
        <position position="119"/>
    </location>
    <ligand>
        <name>Fe cation</name>
        <dbReference type="ChEBI" id="CHEBI:24875"/>
        <label>1</label>
    </ligand>
</feature>
<feature type="binding site" evidence="1">
    <location>
        <position position="205"/>
    </location>
    <ligand>
        <name>Fe cation</name>
        <dbReference type="ChEBI" id="CHEBI:24875"/>
        <label>2</label>
    </ligand>
</feature>
<feature type="binding site" evidence="1">
    <location>
        <position position="239"/>
    </location>
    <ligand>
        <name>Fe cation</name>
        <dbReference type="ChEBI" id="CHEBI:24875"/>
        <label>2</label>
    </ligand>
</feature>
<feature type="binding site" evidence="1">
    <location>
        <position position="242"/>
    </location>
    <ligand>
        <name>Fe cation</name>
        <dbReference type="ChEBI" id="CHEBI:24875"/>
        <label>2</label>
    </ligand>
</feature>
<dbReference type="EC" id="1.17.4.1"/>
<dbReference type="EMBL" id="BA000003">
    <property type="protein sequence ID" value="BAB12895.1"/>
    <property type="molecule type" value="Genomic_DNA"/>
</dbReference>
<dbReference type="RefSeq" id="NP_240009.1">
    <property type="nucleotide sequence ID" value="NC_002528.1"/>
</dbReference>
<dbReference type="RefSeq" id="WP_009874135.1">
    <property type="nucleotide sequence ID" value="NC_002528.1"/>
</dbReference>
<dbReference type="SMR" id="P57275"/>
<dbReference type="STRING" id="563178.BUAP5A_175"/>
<dbReference type="EnsemblBacteria" id="BAB12895">
    <property type="protein sequence ID" value="BAB12895"/>
    <property type="gene ID" value="BAB12895"/>
</dbReference>
<dbReference type="KEGG" id="buc:BU178"/>
<dbReference type="PATRIC" id="fig|107806.10.peg.189"/>
<dbReference type="eggNOG" id="COG0208">
    <property type="taxonomic scope" value="Bacteria"/>
</dbReference>
<dbReference type="HOGENOM" id="CLU_062403_0_0_6"/>
<dbReference type="Proteomes" id="UP000001806">
    <property type="component" value="Chromosome"/>
</dbReference>
<dbReference type="GO" id="GO:0046872">
    <property type="term" value="F:metal ion binding"/>
    <property type="evidence" value="ECO:0007669"/>
    <property type="project" value="UniProtKB-KW"/>
</dbReference>
<dbReference type="GO" id="GO:0004748">
    <property type="term" value="F:ribonucleoside-diphosphate reductase activity, thioredoxin disulfide as acceptor"/>
    <property type="evidence" value="ECO:0007669"/>
    <property type="project" value="UniProtKB-EC"/>
</dbReference>
<dbReference type="GO" id="GO:0009263">
    <property type="term" value="P:deoxyribonucleotide biosynthetic process"/>
    <property type="evidence" value="ECO:0007669"/>
    <property type="project" value="UniProtKB-KW"/>
</dbReference>
<dbReference type="CDD" id="cd01049">
    <property type="entry name" value="RNRR2"/>
    <property type="match status" value="1"/>
</dbReference>
<dbReference type="FunFam" id="1.10.620.20:FF:000001">
    <property type="entry name" value="Ribonucleoside-diphosphate reductase 1 subunit beta"/>
    <property type="match status" value="1"/>
</dbReference>
<dbReference type="Gene3D" id="1.10.620.20">
    <property type="entry name" value="Ribonucleotide Reductase, subunit A"/>
    <property type="match status" value="1"/>
</dbReference>
<dbReference type="InterPro" id="IPR009078">
    <property type="entry name" value="Ferritin-like_SF"/>
</dbReference>
<dbReference type="InterPro" id="IPR012348">
    <property type="entry name" value="RNR-like"/>
</dbReference>
<dbReference type="InterPro" id="IPR033909">
    <property type="entry name" value="RNR_small"/>
</dbReference>
<dbReference type="InterPro" id="IPR030475">
    <property type="entry name" value="RNR_small_AS"/>
</dbReference>
<dbReference type="InterPro" id="IPR000358">
    <property type="entry name" value="RNR_small_fam"/>
</dbReference>
<dbReference type="NCBIfam" id="NF006576">
    <property type="entry name" value="PRK09101.1"/>
    <property type="match status" value="1"/>
</dbReference>
<dbReference type="PANTHER" id="PTHR23409">
    <property type="entry name" value="RIBONUCLEOSIDE-DIPHOSPHATE REDUCTASE SMALL CHAIN"/>
    <property type="match status" value="1"/>
</dbReference>
<dbReference type="PANTHER" id="PTHR23409:SF18">
    <property type="entry name" value="RIBONUCLEOSIDE-DIPHOSPHATE REDUCTASE SUBUNIT M2"/>
    <property type="match status" value="1"/>
</dbReference>
<dbReference type="Pfam" id="PF00268">
    <property type="entry name" value="Ribonuc_red_sm"/>
    <property type="match status" value="1"/>
</dbReference>
<dbReference type="SUPFAM" id="SSF47240">
    <property type="entry name" value="Ferritin-like"/>
    <property type="match status" value="1"/>
</dbReference>
<dbReference type="PROSITE" id="PS00368">
    <property type="entry name" value="RIBORED_SMALL"/>
    <property type="match status" value="1"/>
</dbReference>
<organism>
    <name type="scientific">Buchnera aphidicola subsp. Acyrthosiphon pisum (strain APS)</name>
    <name type="common">Acyrthosiphon pisum symbiotic bacterium</name>
    <dbReference type="NCBI Taxonomy" id="107806"/>
    <lineage>
        <taxon>Bacteria</taxon>
        <taxon>Pseudomonadati</taxon>
        <taxon>Pseudomonadota</taxon>
        <taxon>Gammaproteobacteria</taxon>
        <taxon>Enterobacterales</taxon>
        <taxon>Erwiniaceae</taxon>
        <taxon>Buchnera</taxon>
    </lineage>
</organism>
<name>RIR2_BUCAI</name>
<reference key="1">
    <citation type="journal article" date="2000" name="Nature">
        <title>Genome sequence of the endocellular bacterial symbiont of aphids Buchnera sp. APS.</title>
        <authorList>
            <person name="Shigenobu S."/>
            <person name="Watanabe H."/>
            <person name="Hattori M."/>
            <person name="Sakaki Y."/>
            <person name="Ishikawa H."/>
        </authorList>
    </citation>
    <scope>NUCLEOTIDE SEQUENCE [LARGE SCALE GENOMIC DNA]</scope>
    <source>
        <strain>APS</strain>
    </source>
</reference>
<accession>P57275</accession>
<sequence>MSYTIFSKKKNNQLKEPMFFGQPVNIARYDQQKYKIFEQLIEKQLSFFWRPEEIDLSRDRIDFQNLPDNEKHIFISNLKYQTLLDSIQGRSPNIAFLPIISIPELETWIETWSFSETIHSRSYTHIIRNIVNCPSLVFDDIISNKNIYDRAQNISIYYDELINLTSYWHLLGEGIHLINGKKIHINLRFLKKRLYLCLISVNVLEAIRFYVSFACSFAFAERELMEGNAKIIRLIARDEALHLTGTQHILNLLSNIKNNENMEDVVLECKEEAINIFISAAQQEKKWASYLFKSGSMLGLNKDILCQYIEYITNIRMHAIGFKMPFKKQSNPIPWINDWLTSDNIQIAPQETEISSYLVGQIDSEVSDNEFKKFEL</sequence>
<proteinExistence type="inferred from homology"/>
<gene>
    <name type="primary">nrdB</name>
    <name type="ordered locus">BU178</name>
</gene>
<protein>
    <recommendedName>
        <fullName>Ribonucleoside-diphosphate reductase subunit beta</fullName>
        <ecNumber>1.17.4.1</ecNumber>
    </recommendedName>
    <alternativeName>
        <fullName>Ribonucleotide reductase small subunit</fullName>
    </alternativeName>
</protein>
<comment type="function">
    <text evidence="1">Provides the precursors necessary for DNA synthesis. Catalyzes the biosynthesis of deoxyribonucleotides from the corresponding ribonucleotides (By similarity).</text>
</comment>
<comment type="catalytic activity">
    <reaction evidence="2">
        <text>a 2'-deoxyribonucleoside 5'-diphosphate + [thioredoxin]-disulfide + H2O = a ribonucleoside 5'-diphosphate + [thioredoxin]-dithiol</text>
        <dbReference type="Rhea" id="RHEA:23252"/>
        <dbReference type="Rhea" id="RHEA-COMP:10698"/>
        <dbReference type="Rhea" id="RHEA-COMP:10700"/>
        <dbReference type="ChEBI" id="CHEBI:15377"/>
        <dbReference type="ChEBI" id="CHEBI:29950"/>
        <dbReference type="ChEBI" id="CHEBI:50058"/>
        <dbReference type="ChEBI" id="CHEBI:57930"/>
        <dbReference type="ChEBI" id="CHEBI:73316"/>
        <dbReference type="EC" id="1.17.4.1"/>
    </reaction>
</comment>
<comment type="cofactor">
    <cofactor evidence="1">
        <name>Fe cation</name>
        <dbReference type="ChEBI" id="CHEBI:24875"/>
    </cofactor>
    <text evidence="1">Binds 2 iron ions per subunit.</text>
</comment>
<comment type="subunit">
    <text evidence="1">Tetramer of two alpha and two beta subunits.</text>
</comment>
<comment type="similarity">
    <text evidence="3">Belongs to the ribonucleoside diphosphate reductase small chain family.</text>
</comment>
<evidence type="ECO:0000250" key="1"/>
<evidence type="ECO:0000255" key="2">
    <source>
        <dbReference type="PROSITE-ProRule" id="PRU10014"/>
    </source>
</evidence>
<evidence type="ECO:0000305" key="3"/>